<reference key="1">
    <citation type="journal article" date="2005" name="Genome Res.">
        <title>The Chlamydophila abortus genome sequence reveals an array of variable proteins that contribute to interspecies variation.</title>
        <authorList>
            <person name="Thomson N.R."/>
            <person name="Yeats C."/>
            <person name="Bell K."/>
            <person name="Holden M.T.G."/>
            <person name="Bentley S.D."/>
            <person name="Livingstone M."/>
            <person name="Cerdeno-Tarraga A.-M."/>
            <person name="Harris B."/>
            <person name="Doggett J."/>
            <person name="Ormond D."/>
            <person name="Mungall K."/>
            <person name="Clarke K."/>
            <person name="Feltwell T."/>
            <person name="Hance Z."/>
            <person name="Sanders M."/>
            <person name="Quail M.A."/>
            <person name="Price C."/>
            <person name="Barrell B.G."/>
            <person name="Parkhill J."/>
            <person name="Longbottom D."/>
        </authorList>
    </citation>
    <scope>NUCLEOTIDE SEQUENCE [LARGE SCALE GENOMIC DNA]</scope>
    <source>
        <strain>DSM 27085 / S26/3</strain>
    </source>
</reference>
<dbReference type="EMBL" id="CR848038">
    <property type="protein sequence ID" value="CAH63561.1"/>
    <property type="molecule type" value="Genomic_DNA"/>
</dbReference>
<dbReference type="RefSeq" id="WP_011096830.1">
    <property type="nucleotide sequence ID" value="NC_004552.2"/>
</dbReference>
<dbReference type="SMR" id="Q5L709"/>
<dbReference type="KEGG" id="cab:CAB103"/>
<dbReference type="eggNOG" id="COG0198">
    <property type="taxonomic scope" value="Bacteria"/>
</dbReference>
<dbReference type="HOGENOM" id="CLU_093315_2_1_0"/>
<dbReference type="OrthoDB" id="9807419at2"/>
<dbReference type="Proteomes" id="UP000001012">
    <property type="component" value="Chromosome"/>
</dbReference>
<dbReference type="GO" id="GO:1990904">
    <property type="term" value="C:ribonucleoprotein complex"/>
    <property type="evidence" value="ECO:0007669"/>
    <property type="project" value="UniProtKB-KW"/>
</dbReference>
<dbReference type="GO" id="GO:0005840">
    <property type="term" value="C:ribosome"/>
    <property type="evidence" value="ECO:0007669"/>
    <property type="project" value="UniProtKB-KW"/>
</dbReference>
<dbReference type="GO" id="GO:0019843">
    <property type="term" value="F:rRNA binding"/>
    <property type="evidence" value="ECO:0007669"/>
    <property type="project" value="UniProtKB-UniRule"/>
</dbReference>
<dbReference type="GO" id="GO:0003735">
    <property type="term" value="F:structural constituent of ribosome"/>
    <property type="evidence" value="ECO:0007669"/>
    <property type="project" value="InterPro"/>
</dbReference>
<dbReference type="GO" id="GO:0006412">
    <property type="term" value="P:translation"/>
    <property type="evidence" value="ECO:0007669"/>
    <property type="project" value="UniProtKB-UniRule"/>
</dbReference>
<dbReference type="CDD" id="cd06089">
    <property type="entry name" value="KOW_RPL26"/>
    <property type="match status" value="1"/>
</dbReference>
<dbReference type="Gene3D" id="2.30.30.30">
    <property type="match status" value="1"/>
</dbReference>
<dbReference type="HAMAP" id="MF_01326_B">
    <property type="entry name" value="Ribosomal_uL24_B"/>
    <property type="match status" value="1"/>
</dbReference>
<dbReference type="InterPro" id="IPR005824">
    <property type="entry name" value="KOW"/>
</dbReference>
<dbReference type="InterPro" id="IPR014722">
    <property type="entry name" value="Rib_uL2_dom2"/>
</dbReference>
<dbReference type="InterPro" id="IPR003256">
    <property type="entry name" value="Ribosomal_uL24"/>
</dbReference>
<dbReference type="InterPro" id="IPR005825">
    <property type="entry name" value="Ribosomal_uL24_CS"/>
</dbReference>
<dbReference type="InterPro" id="IPR041988">
    <property type="entry name" value="Ribosomal_uL24_KOW"/>
</dbReference>
<dbReference type="InterPro" id="IPR008991">
    <property type="entry name" value="Translation_prot_SH3-like_sf"/>
</dbReference>
<dbReference type="NCBIfam" id="TIGR01079">
    <property type="entry name" value="rplX_bact"/>
    <property type="match status" value="1"/>
</dbReference>
<dbReference type="PANTHER" id="PTHR12903">
    <property type="entry name" value="MITOCHONDRIAL RIBOSOMAL PROTEIN L24"/>
    <property type="match status" value="1"/>
</dbReference>
<dbReference type="Pfam" id="PF00467">
    <property type="entry name" value="KOW"/>
    <property type="match status" value="1"/>
</dbReference>
<dbReference type="Pfam" id="PF17136">
    <property type="entry name" value="ribosomal_L24"/>
    <property type="match status" value="1"/>
</dbReference>
<dbReference type="SMART" id="SM00739">
    <property type="entry name" value="KOW"/>
    <property type="match status" value="1"/>
</dbReference>
<dbReference type="SUPFAM" id="SSF50104">
    <property type="entry name" value="Translation proteins SH3-like domain"/>
    <property type="match status" value="1"/>
</dbReference>
<dbReference type="PROSITE" id="PS01108">
    <property type="entry name" value="RIBOSOMAL_L24"/>
    <property type="match status" value="1"/>
</dbReference>
<gene>
    <name evidence="1" type="primary">rplX</name>
    <name type="ordered locus">CAB103</name>
</gene>
<accession>Q5L709</accession>
<proteinExistence type="inferred from homology"/>
<comment type="function">
    <text evidence="1">One of two assembly initiator proteins, it binds directly to the 5'-end of the 23S rRNA, where it nucleates assembly of the 50S subunit.</text>
</comment>
<comment type="function">
    <text evidence="1">One of the proteins that surrounds the polypeptide exit tunnel on the outside of the subunit.</text>
</comment>
<comment type="subunit">
    <text evidence="1">Part of the 50S ribosomal subunit.</text>
</comment>
<comment type="similarity">
    <text evidence="1">Belongs to the universal ribosomal protein uL24 family.</text>
</comment>
<evidence type="ECO:0000255" key="1">
    <source>
        <dbReference type="HAMAP-Rule" id="MF_01326"/>
    </source>
</evidence>
<evidence type="ECO:0000305" key="2"/>
<sequence length="113" mass="12546">MKRRSVCVGDTVYVLAGNDKGKQGKVLSCLREKNKVVVEGVNVRTKNIKRSQENPKGKRINIEAPIHISNVRLSIDGAPAKLSVKVTENGRELWNKSSDGTSKLYRSVKERKG</sequence>
<protein>
    <recommendedName>
        <fullName evidence="1">Large ribosomal subunit protein uL24</fullName>
    </recommendedName>
    <alternativeName>
        <fullName evidence="2">50S ribosomal protein L24</fullName>
    </alternativeName>
</protein>
<name>RL24_CHLAB</name>
<organism>
    <name type="scientific">Chlamydia abortus (strain DSM 27085 / S26/3)</name>
    <name type="common">Chlamydophila abortus</name>
    <dbReference type="NCBI Taxonomy" id="218497"/>
    <lineage>
        <taxon>Bacteria</taxon>
        <taxon>Pseudomonadati</taxon>
        <taxon>Chlamydiota</taxon>
        <taxon>Chlamydiia</taxon>
        <taxon>Chlamydiales</taxon>
        <taxon>Chlamydiaceae</taxon>
        <taxon>Chlamydia/Chlamydophila group</taxon>
        <taxon>Chlamydia</taxon>
    </lineage>
</organism>
<keyword id="KW-0687">Ribonucleoprotein</keyword>
<keyword id="KW-0689">Ribosomal protein</keyword>
<keyword id="KW-0694">RNA-binding</keyword>
<keyword id="KW-0699">rRNA-binding</keyword>
<feature type="chain" id="PRO_0000241584" description="Large ribosomal subunit protein uL24">
    <location>
        <begin position="1"/>
        <end position="113"/>
    </location>
</feature>